<protein>
    <recommendedName>
        <fullName evidence="1">Protein-L-isoaspartate O-methyltransferase</fullName>
        <ecNumber evidence="1">2.1.1.77</ecNumber>
    </recommendedName>
    <alternativeName>
        <fullName evidence="1">L-isoaspartyl protein carboxyl methyltransferase</fullName>
    </alternativeName>
    <alternativeName>
        <fullName evidence="1">Protein L-isoaspartyl methyltransferase</fullName>
    </alternativeName>
    <alternativeName>
        <fullName evidence="1">Protein-beta-aspartate methyltransferase</fullName>
        <shortName evidence="1">PIMT</shortName>
    </alternativeName>
</protein>
<comment type="function">
    <text evidence="1">Catalyzes the methyl esterification of L-isoaspartyl residues in peptides and proteins that result from spontaneous decomposition of normal L-aspartyl and L-asparaginyl residues. It plays a role in the repair and/or degradation of damaged proteins.</text>
</comment>
<comment type="catalytic activity">
    <reaction evidence="1">
        <text>[protein]-L-isoaspartate + S-adenosyl-L-methionine = [protein]-L-isoaspartate alpha-methyl ester + S-adenosyl-L-homocysteine</text>
        <dbReference type="Rhea" id="RHEA:12705"/>
        <dbReference type="Rhea" id="RHEA-COMP:12143"/>
        <dbReference type="Rhea" id="RHEA-COMP:12144"/>
        <dbReference type="ChEBI" id="CHEBI:57856"/>
        <dbReference type="ChEBI" id="CHEBI:59789"/>
        <dbReference type="ChEBI" id="CHEBI:90596"/>
        <dbReference type="ChEBI" id="CHEBI:90598"/>
        <dbReference type="EC" id="2.1.1.77"/>
    </reaction>
</comment>
<comment type="subcellular location">
    <subcellularLocation>
        <location evidence="1">Cytoplasm</location>
    </subcellularLocation>
</comment>
<comment type="similarity">
    <text evidence="1">Belongs to the methyltransferase superfamily. L-isoaspartyl/D-aspartyl protein methyltransferase family.</text>
</comment>
<keyword id="KW-0963">Cytoplasm</keyword>
<keyword id="KW-0489">Methyltransferase</keyword>
<keyword id="KW-1185">Reference proteome</keyword>
<keyword id="KW-0949">S-adenosyl-L-methionine</keyword>
<keyword id="KW-0808">Transferase</keyword>
<feature type="chain" id="PRO_0000351898" description="Protein-L-isoaspartate O-methyltransferase">
    <location>
        <begin position="1"/>
        <end position="222"/>
    </location>
</feature>
<feature type="active site" evidence="1">
    <location>
        <position position="65"/>
    </location>
</feature>
<reference key="1">
    <citation type="submission" date="2005-08" db="EMBL/GenBank/DDBJ databases">
        <title>Complete sequence of Pelodictyon luteolum DSM 273.</title>
        <authorList>
            <consortium name="US DOE Joint Genome Institute"/>
            <person name="Copeland A."/>
            <person name="Lucas S."/>
            <person name="Lapidus A."/>
            <person name="Barry K."/>
            <person name="Detter J.C."/>
            <person name="Glavina T."/>
            <person name="Hammon N."/>
            <person name="Israni S."/>
            <person name="Pitluck S."/>
            <person name="Bryant D."/>
            <person name="Schmutz J."/>
            <person name="Larimer F."/>
            <person name="Land M."/>
            <person name="Kyrpides N."/>
            <person name="Ivanova N."/>
            <person name="Richardson P."/>
        </authorList>
    </citation>
    <scope>NUCLEOTIDE SEQUENCE [LARGE SCALE GENOMIC DNA]</scope>
    <source>
        <strain>DSM 273 / BCRC 81028 / 2530</strain>
    </source>
</reference>
<organism>
    <name type="scientific">Chlorobium luteolum (strain DSM 273 / BCRC 81028 / 2530)</name>
    <name type="common">Pelodictyon luteolum</name>
    <dbReference type="NCBI Taxonomy" id="319225"/>
    <lineage>
        <taxon>Bacteria</taxon>
        <taxon>Pseudomonadati</taxon>
        <taxon>Chlorobiota</taxon>
        <taxon>Chlorobiia</taxon>
        <taxon>Chlorobiales</taxon>
        <taxon>Chlorobiaceae</taxon>
        <taxon>Chlorobium/Pelodictyon group</taxon>
        <taxon>Pelodictyon</taxon>
    </lineage>
</organism>
<sequence>MEWSESVFDGRRREMVEGLRRSGIMNARVLEAFLEVRRHLFFPESEREHAYDDAAWPIGHGQTISQPYTVAYMTSLLADRVPSGKVLEVGTGSGYQSAILDAMGYRVFTIERVAALYSEALGRFRRFALPVAAKLGDGSEGWPEEAPFNAVLVTAAAPKEPEALLRQLSDNGCLVIPLGGMDVQQMTVITRRGEVFLKERYHEFAFVPLIGREGWEEEQEQS</sequence>
<evidence type="ECO:0000255" key="1">
    <source>
        <dbReference type="HAMAP-Rule" id="MF_00090"/>
    </source>
</evidence>
<dbReference type="EC" id="2.1.1.77" evidence="1"/>
<dbReference type="EMBL" id="CP000096">
    <property type="protein sequence ID" value="ABB24765.1"/>
    <property type="molecule type" value="Genomic_DNA"/>
</dbReference>
<dbReference type="RefSeq" id="WP_011358635.1">
    <property type="nucleotide sequence ID" value="NC_007512.1"/>
</dbReference>
<dbReference type="SMR" id="Q3B1L6"/>
<dbReference type="STRING" id="319225.Plut_1923"/>
<dbReference type="KEGG" id="plt:Plut_1923"/>
<dbReference type="eggNOG" id="COG2518">
    <property type="taxonomic scope" value="Bacteria"/>
</dbReference>
<dbReference type="HOGENOM" id="CLU_055432_2_0_10"/>
<dbReference type="OrthoDB" id="9810066at2"/>
<dbReference type="Proteomes" id="UP000002709">
    <property type="component" value="Chromosome"/>
</dbReference>
<dbReference type="GO" id="GO:0005737">
    <property type="term" value="C:cytoplasm"/>
    <property type="evidence" value="ECO:0007669"/>
    <property type="project" value="UniProtKB-SubCell"/>
</dbReference>
<dbReference type="GO" id="GO:0004719">
    <property type="term" value="F:protein-L-isoaspartate (D-aspartate) O-methyltransferase activity"/>
    <property type="evidence" value="ECO:0007669"/>
    <property type="project" value="UniProtKB-UniRule"/>
</dbReference>
<dbReference type="GO" id="GO:0032259">
    <property type="term" value="P:methylation"/>
    <property type="evidence" value="ECO:0007669"/>
    <property type="project" value="UniProtKB-KW"/>
</dbReference>
<dbReference type="GO" id="GO:0036211">
    <property type="term" value="P:protein modification process"/>
    <property type="evidence" value="ECO:0007669"/>
    <property type="project" value="UniProtKB-UniRule"/>
</dbReference>
<dbReference type="GO" id="GO:0030091">
    <property type="term" value="P:protein repair"/>
    <property type="evidence" value="ECO:0007669"/>
    <property type="project" value="UniProtKB-UniRule"/>
</dbReference>
<dbReference type="CDD" id="cd02440">
    <property type="entry name" value="AdoMet_MTases"/>
    <property type="match status" value="1"/>
</dbReference>
<dbReference type="FunFam" id="3.40.50.150:FF:000010">
    <property type="entry name" value="Protein-L-isoaspartate O-methyltransferase"/>
    <property type="match status" value="1"/>
</dbReference>
<dbReference type="Gene3D" id="3.40.50.150">
    <property type="entry name" value="Vaccinia Virus protein VP39"/>
    <property type="match status" value="1"/>
</dbReference>
<dbReference type="HAMAP" id="MF_00090">
    <property type="entry name" value="PIMT"/>
    <property type="match status" value="1"/>
</dbReference>
<dbReference type="InterPro" id="IPR000682">
    <property type="entry name" value="PCMT"/>
</dbReference>
<dbReference type="InterPro" id="IPR029063">
    <property type="entry name" value="SAM-dependent_MTases_sf"/>
</dbReference>
<dbReference type="NCBIfam" id="TIGR00080">
    <property type="entry name" value="pimt"/>
    <property type="match status" value="1"/>
</dbReference>
<dbReference type="NCBIfam" id="NF001453">
    <property type="entry name" value="PRK00312.1"/>
    <property type="match status" value="1"/>
</dbReference>
<dbReference type="PANTHER" id="PTHR11579">
    <property type="entry name" value="PROTEIN-L-ISOASPARTATE O-METHYLTRANSFERASE"/>
    <property type="match status" value="1"/>
</dbReference>
<dbReference type="PANTHER" id="PTHR11579:SF0">
    <property type="entry name" value="PROTEIN-L-ISOASPARTATE(D-ASPARTATE) O-METHYLTRANSFERASE"/>
    <property type="match status" value="1"/>
</dbReference>
<dbReference type="Pfam" id="PF01135">
    <property type="entry name" value="PCMT"/>
    <property type="match status" value="1"/>
</dbReference>
<dbReference type="SUPFAM" id="SSF53335">
    <property type="entry name" value="S-adenosyl-L-methionine-dependent methyltransferases"/>
    <property type="match status" value="1"/>
</dbReference>
<name>PIMT_CHLL3</name>
<gene>
    <name evidence="1" type="primary">pcm</name>
    <name type="ordered locus">Plut_1923</name>
</gene>
<proteinExistence type="inferred from homology"/>
<accession>Q3B1L6</accession>